<keyword id="KW-0949">S-adenosyl-L-methionine</keyword>
<keyword id="KW-0808">Transferase</keyword>
<gene>
    <name evidence="1" type="primary">cmoA</name>
    <name type="ordered locus">YPK_2151</name>
</gene>
<name>CMOA_YERPY</name>
<organism>
    <name type="scientific">Yersinia pseudotuberculosis serotype O:3 (strain YPIII)</name>
    <dbReference type="NCBI Taxonomy" id="502800"/>
    <lineage>
        <taxon>Bacteria</taxon>
        <taxon>Pseudomonadati</taxon>
        <taxon>Pseudomonadota</taxon>
        <taxon>Gammaproteobacteria</taxon>
        <taxon>Enterobacterales</taxon>
        <taxon>Yersiniaceae</taxon>
        <taxon>Yersinia</taxon>
    </lineage>
</organism>
<sequence>MPNRDTQSQNDTPRHSPEAAEPQRDSLFAAPIAKLGDWTFDEKVAEVFPDMIQRSVPGYSNIISMIGMLAERFVQPNSQIYDLGCSLGAATLSMRRNIKAEGCKIIAVDNSPAMVERCRRHIDAFRAETPVDVVEADILDIKLENASMVVLNFTLQFLEPANRQRLLNQVYQGLRPGGALVLSEKFSFADHNVGELLFNMHHDFKRANGYSELEISQKRSMLENVMLTDSVETHKNRLHQAGFEHAEVWFQCFNFGSLIALKAGEAQ</sequence>
<protein>
    <recommendedName>
        <fullName evidence="1">Carboxy-S-adenosyl-L-methionine synthase</fullName>
        <shortName evidence="1">Cx-SAM synthase</shortName>
        <ecNumber evidence="1">2.1.3.-</ecNumber>
    </recommendedName>
</protein>
<dbReference type="EC" id="2.1.3.-" evidence="1"/>
<dbReference type="EMBL" id="CP000950">
    <property type="protein sequence ID" value="ACA68437.1"/>
    <property type="molecule type" value="Genomic_DNA"/>
</dbReference>
<dbReference type="RefSeq" id="WP_002211207.1">
    <property type="nucleotide sequence ID" value="NZ_CP009792.1"/>
</dbReference>
<dbReference type="SMR" id="B1JLL8"/>
<dbReference type="GeneID" id="57976611"/>
<dbReference type="KEGG" id="ypy:YPK_2151"/>
<dbReference type="PATRIC" id="fig|502800.11.peg.2825"/>
<dbReference type="GO" id="GO:0016743">
    <property type="term" value="F:carboxyl- or carbamoyltransferase activity"/>
    <property type="evidence" value="ECO:0007669"/>
    <property type="project" value="UniProtKB-UniRule"/>
</dbReference>
<dbReference type="GO" id="GO:1904047">
    <property type="term" value="F:S-adenosyl-L-methionine binding"/>
    <property type="evidence" value="ECO:0007669"/>
    <property type="project" value="UniProtKB-UniRule"/>
</dbReference>
<dbReference type="GO" id="GO:0002098">
    <property type="term" value="P:tRNA wobble uridine modification"/>
    <property type="evidence" value="ECO:0007669"/>
    <property type="project" value="InterPro"/>
</dbReference>
<dbReference type="CDD" id="cd02440">
    <property type="entry name" value="AdoMet_MTases"/>
    <property type="match status" value="1"/>
</dbReference>
<dbReference type="Gene3D" id="3.40.50.150">
    <property type="entry name" value="Vaccinia Virus protein VP39"/>
    <property type="match status" value="1"/>
</dbReference>
<dbReference type="HAMAP" id="MF_01589">
    <property type="entry name" value="Cx_SAM_synthase"/>
    <property type="match status" value="1"/>
</dbReference>
<dbReference type="InterPro" id="IPR005271">
    <property type="entry name" value="CmoA"/>
</dbReference>
<dbReference type="InterPro" id="IPR041698">
    <property type="entry name" value="Methyltransf_25"/>
</dbReference>
<dbReference type="InterPro" id="IPR029063">
    <property type="entry name" value="SAM-dependent_MTases_sf"/>
</dbReference>
<dbReference type="NCBIfam" id="TIGR00740">
    <property type="entry name" value="carboxy-S-adenosyl-L-methionine synthase CmoA"/>
    <property type="match status" value="1"/>
</dbReference>
<dbReference type="NCBIfam" id="NF011995">
    <property type="entry name" value="PRK15451.1"/>
    <property type="match status" value="1"/>
</dbReference>
<dbReference type="PANTHER" id="PTHR43861:SF2">
    <property type="entry name" value="CARBOXY-S-ADENOSYL-L-METHIONINE SYNTHASE"/>
    <property type="match status" value="1"/>
</dbReference>
<dbReference type="PANTHER" id="PTHR43861">
    <property type="entry name" value="TRANS-ACONITATE 2-METHYLTRANSFERASE-RELATED"/>
    <property type="match status" value="1"/>
</dbReference>
<dbReference type="Pfam" id="PF13649">
    <property type="entry name" value="Methyltransf_25"/>
    <property type="match status" value="1"/>
</dbReference>
<dbReference type="PIRSF" id="PIRSF006325">
    <property type="entry name" value="MeTrfase_bac"/>
    <property type="match status" value="1"/>
</dbReference>
<dbReference type="SUPFAM" id="SSF53335">
    <property type="entry name" value="S-adenosyl-L-methionine-dependent methyltransferases"/>
    <property type="match status" value="1"/>
</dbReference>
<evidence type="ECO:0000255" key="1">
    <source>
        <dbReference type="HAMAP-Rule" id="MF_01589"/>
    </source>
</evidence>
<evidence type="ECO:0000256" key="2">
    <source>
        <dbReference type="SAM" id="MobiDB-lite"/>
    </source>
</evidence>
<feature type="chain" id="PRO_1000201374" description="Carboxy-S-adenosyl-L-methionine synthase">
    <location>
        <begin position="1"/>
        <end position="267"/>
    </location>
</feature>
<feature type="region of interest" description="Disordered" evidence="2">
    <location>
        <begin position="1"/>
        <end position="25"/>
    </location>
</feature>
<feature type="compositionally biased region" description="Polar residues" evidence="2">
    <location>
        <begin position="1"/>
        <end position="11"/>
    </location>
</feature>
<feature type="compositionally biased region" description="Basic and acidic residues" evidence="2">
    <location>
        <begin position="12"/>
        <end position="24"/>
    </location>
</feature>
<feature type="binding site" evidence="1">
    <location>
        <position position="59"/>
    </location>
    <ligand>
        <name>S-adenosyl-L-methionine</name>
        <dbReference type="ChEBI" id="CHEBI:59789"/>
    </ligand>
</feature>
<feature type="binding site" evidence="1">
    <location>
        <begin position="84"/>
        <end position="86"/>
    </location>
    <ligand>
        <name>S-adenosyl-L-methionine</name>
        <dbReference type="ChEBI" id="CHEBI:59789"/>
    </ligand>
</feature>
<feature type="binding site" evidence="1">
    <location>
        <begin position="109"/>
        <end position="110"/>
    </location>
    <ligand>
        <name>S-adenosyl-L-methionine</name>
        <dbReference type="ChEBI" id="CHEBI:59789"/>
    </ligand>
</feature>
<feature type="binding site" evidence="1">
    <location>
        <begin position="137"/>
        <end position="138"/>
    </location>
    <ligand>
        <name>S-adenosyl-L-methionine</name>
        <dbReference type="ChEBI" id="CHEBI:59789"/>
    </ligand>
</feature>
<feature type="binding site" evidence="1">
    <location>
        <position position="152"/>
    </location>
    <ligand>
        <name>S-adenosyl-L-methionine</name>
        <dbReference type="ChEBI" id="CHEBI:59789"/>
    </ligand>
</feature>
<feature type="binding site" evidence="1">
    <location>
        <position position="219"/>
    </location>
    <ligand>
        <name>S-adenosyl-L-methionine</name>
        <dbReference type="ChEBI" id="CHEBI:59789"/>
    </ligand>
</feature>
<proteinExistence type="inferred from homology"/>
<accession>B1JLL8</accession>
<comment type="function">
    <text evidence="1">Catalyzes the conversion of S-adenosyl-L-methionine (SAM) to carboxy-S-adenosyl-L-methionine (Cx-SAM).</text>
</comment>
<comment type="catalytic activity">
    <reaction evidence="1">
        <text>prephenate + S-adenosyl-L-methionine = carboxy-S-adenosyl-L-methionine + 3-phenylpyruvate + H2O</text>
        <dbReference type="Rhea" id="RHEA:51692"/>
        <dbReference type="ChEBI" id="CHEBI:15377"/>
        <dbReference type="ChEBI" id="CHEBI:18005"/>
        <dbReference type="ChEBI" id="CHEBI:29934"/>
        <dbReference type="ChEBI" id="CHEBI:59789"/>
        <dbReference type="ChEBI" id="CHEBI:134278"/>
    </reaction>
</comment>
<comment type="subunit">
    <text evidence="1">Homodimer.</text>
</comment>
<comment type="similarity">
    <text evidence="1">Belongs to the class I-like SAM-binding methyltransferase superfamily. Cx-SAM synthase family.</text>
</comment>
<reference key="1">
    <citation type="submission" date="2008-02" db="EMBL/GenBank/DDBJ databases">
        <title>Complete sequence of Yersinia pseudotuberculosis YPIII.</title>
        <authorList>
            <consortium name="US DOE Joint Genome Institute"/>
            <person name="Copeland A."/>
            <person name="Lucas S."/>
            <person name="Lapidus A."/>
            <person name="Glavina del Rio T."/>
            <person name="Dalin E."/>
            <person name="Tice H."/>
            <person name="Bruce D."/>
            <person name="Goodwin L."/>
            <person name="Pitluck S."/>
            <person name="Munk A.C."/>
            <person name="Brettin T."/>
            <person name="Detter J.C."/>
            <person name="Han C."/>
            <person name="Tapia R."/>
            <person name="Schmutz J."/>
            <person name="Larimer F."/>
            <person name="Land M."/>
            <person name="Hauser L."/>
            <person name="Challacombe J.F."/>
            <person name="Green L."/>
            <person name="Lindler L.E."/>
            <person name="Nikolich M.P."/>
            <person name="Richardson P."/>
        </authorList>
    </citation>
    <scope>NUCLEOTIDE SEQUENCE [LARGE SCALE GENOMIC DNA]</scope>
    <source>
        <strain>YPIII</strain>
    </source>
</reference>